<feature type="chain" id="PRO_0000424251" description="Urease accessory protein D">
    <location>
        <begin position="1"/>
        <end position="309"/>
    </location>
</feature>
<evidence type="ECO:0000250" key="1"/>
<evidence type="ECO:0000305" key="2"/>
<name>URED_ORYSJ</name>
<reference key="1">
    <citation type="journal article" date="2005" name="Nature">
        <title>The map-based sequence of the rice genome.</title>
        <authorList>
            <consortium name="International rice genome sequencing project (IRGSP)"/>
        </authorList>
    </citation>
    <scope>NUCLEOTIDE SEQUENCE [LARGE SCALE GENOMIC DNA]</scope>
    <source>
        <strain>cv. Nipponbare</strain>
    </source>
</reference>
<reference key="2">
    <citation type="journal article" date="2008" name="Nucleic Acids Res.">
        <title>The rice annotation project database (RAP-DB): 2008 update.</title>
        <authorList>
            <consortium name="The rice annotation project (RAP)"/>
        </authorList>
    </citation>
    <scope>GENOME REANNOTATION</scope>
    <source>
        <strain>cv. Nipponbare</strain>
    </source>
</reference>
<reference key="3">
    <citation type="journal article" date="2013" name="Rice">
        <title>Improvement of the Oryza sativa Nipponbare reference genome using next generation sequence and optical map data.</title>
        <authorList>
            <person name="Kawahara Y."/>
            <person name="de la Bastide M."/>
            <person name="Hamilton J.P."/>
            <person name="Kanamori H."/>
            <person name="McCombie W.R."/>
            <person name="Ouyang S."/>
            <person name="Schwartz D.C."/>
            <person name="Tanaka T."/>
            <person name="Wu J."/>
            <person name="Zhou S."/>
            <person name="Childs K.L."/>
            <person name="Davidson R.M."/>
            <person name="Lin H."/>
            <person name="Quesada-Ocampo L."/>
            <person name="Vaillancourt B."/>
            <person name="Sakai H."/>
            <person name="Lee S.S."/>
            <person name="Kim J."/>
            <person name="Numa H."/>
            <person name="Itoh T."/>
            <person name="Buell C.R."/>
            <person name="Matsumoto T."/>
        </authorList>
    </citation>
    <scope>GENOME REANNOTATION</scope>
    <source>
        <strain>cv. Nipponbare</strain>
    </source>
</reference>
<proteinExistence type="inferred from homology"/>
<comment type="function">
    <text evidence="1">Required for the maturation and activation of urease via the functional incorporation of the urease nickel metallocenter.</text>
</comment>
<comment type="subunit">
    <text evidence="1">URED, UREF and UREG may form a complex that acts as a GTP-hydrolysis-dependent molecular chaperone, activating the urease apoprotein.</text>
</comment>
<comment type="similarity">
    <text evidence="2">Belongs to the UreD family.</text>
</comment>
<comment type="sequence caution" evidence="2">
    <conflict type="erroneous gene model prediction">
        <sequence resource="EMBL-CDS" id="BAF07949"/>
    </conflict>
</comment>
<accession>Q0E3I9</accession>
<keyword id="KW-0143">Chaperone</keyword>
<keyword id="KW-0996">Nickel insertion</keyword>
<keyword id="KW-1185">Reference proteome</keyword>
<organism>
    <name type="scientific">Oryza sativa subsp. japonica</name>
    <name type="common">Rice</name>
    <dbReference type="NCBI Taxonomy" id="39947"/>
    <lineage>
        <taxon>Eukaryota</taxon>
        <taxon>Viridiplantae</taxon>
        <taxon>Streptophyta</taxon>
        <taxon>Embryophyta</taxon>
        <taxon>Tracheophyta</taxon>
        <taxon>Spermatophyta</taxon>
        <taxon>Magnoliopsida</taxon>
        <taxon>Liliopsida</taxon>
        <taxon>Poales</taxon>
        <taxon>Poaceae</taxon>
        <taxon>BOP clade</taxon>
        <taxon>Oryzoideae</taxon>
        <taxon>Oryzeae</taxon>
        <taxon>Oryzinae</taxon>
        <taxon>Oryza</taxon>
        <taxon>Oryza sativa</taxon>
    </lineage>
</organism>
<gene>
    <name type="primary">URED</name>
    <name type="ordered locus">Os02g0173000</name>
    <name type="ordered locus">LOC_Os02g07670</name>
    <name type="ORF">OSJNBa0073A21</name>
</gene>
<dbReference type="EMBL" id="AP005772">
    <property type="status" value="NOT_ANNOTATED_CDS"/>
    <property type="molecule type" value="Genomic_DNA"/>
</dbReference>
<dbReference type="EMBL" id="AP008208">
    <property type="protein sequence ID" value="BAF07949.1"/>
    <property type="status" value="ALT_SEQ"/>
    <property type="molecule type" value="Genomic_DNA"/>
</dbReference>
<dbReference type="EMBL" id="AP014958">
    <property type="status" value="NOT_ANNOTATED_CDS"/>
    <property type="molecule type" value="Genomic_DNA"/>
</dbReference>
<dbReference type="SMR" id="Q0E3I9"/>
<dbReference type="FunCoup" id="Q0E3I9">
    <property type="interactions" value="11"/>
</dbReference>
<dbReference type="STRING" id="39947.Q0E3I9"/>
<dbReference type="PaxDb" id="39947-Q0E3I9"/>
<dbReference type="KEGG" id="dosa:Os02g0173000"/>
<dbReference type="eggNOG" id="ENOG502RBJU">
    <property type="taxonomic scope" value="Eukaryota"/>
</dbReference>
<dbReference type="InParanoid" id="Q0E3I9"/>
<dbReference type="Proteomes" id="UP000000763">
    <property type="component" value="Chromosome 2"/>
</dbReference>
<dbReference type="Proteomes" id="UP000059680">
    <property type="component" value="Chromosome 2"/>
</dbReference>
<dbReference type="GO" id="GO:0016151">
    <property type="term" value="F:nickel cation binding"/>
    <property type="evidence" value="ECO:0007669"/>
    <property type="project" value="InterPro"/>
</dbReference>
<dbReference type="HAMAP" id="MF_01384">
    <property type="entry name" value="UreD"/>
    <property type="match status" value="1"/>
</dbReference>
<dbReference type="InterPro" id="IPR002669">
    <property type="entry name" value="UreD"/>
</dbReference>
<dbReference type="PANTHER" id="PTHR33643">
    <property type="entry name" value="UREASE ACCESSORY PROTEIN D"/>
    <property type="match status" value="1"/>
</dbReference>
<dbReference type="PANTHER" id="PTHR33643:SF1">
    <property type="entry name" value="UREASE ACCESSORY PROTEIN D"/>
    <property type="match status" value="1"/>
</dbReference>
<dbReference type="Pfam" id="PF01774">
    <property type="entry name" value="UreD"/>
    <property type="match status" value="1"/>
</dbReference>
<sequence length="309" mass="33568">MEAEAAMEAEAAPAAATGAVRVEKVRGRSAVTRCFAKYPLKLIAPSKAGRASSGAAWLYAITYGGGIVSGDIISCTVAVGDGCAAAMTTQASTKVYKAVDSKCSEQVLEARVGEDALFALIPDPVTCFSMARYHQKQVFHVFPNSNLVVVDWFTSGRYESGEKWNFSFYKSINHILLEDQPLFIDSVLLEQSSNFSIADRMQEYNVVAMVILLGPKLKHIQDQMQDEVKKMMSVQLRPPTSAGGRYSTRSQPLHPQRPPIIASCSPFGRMGTGMVARITAVSTESVYSFLRHHLAALEPFLGACPYPAS</sequence>
<protein>
    <recommendedName>
        <fullName>Urease accessory protein D</fullName>
        <shortName>AtURED</shortName>
    </recommendedName>
</protein>